<keyword id="KW-0131">Cell cycle</keyword>
<keyword id="KW-0132">Cell division</keyword>
<keyword id="KW-0175">Coiled coil</keyword>
<keyword id="KW-0963">Cytoplasm</keyword>
<keyword id="KW-0206">Cytoskeleton</keyword>
<keyword id="KW-0493">Microtubule</keyword>
<keyword id="KW-0539">Nucleus</keyword>
<keyword id="KW-0553">Oncogene</keyword>
<keyword id="KW-0597">Phosphoprotein</keyword>
<keyword id="KW-1185">Reference proteome</keyword>
<reference key="1">
    <citation type="journal article" date="2009" name="PLoS Biol.">
        <title>Lineage-specific biology revealed by a finished genome assembly of the mouse.</title>
        <authorList>
            <person name="Church D.M."/>
            <person name="Goodstadt L."/>
            <person name="Hillier L.W."/>
            <person name="Zody M.C."/>
            <person name="Goldstein S."/>
            <person name="She X."/>
            <person name="Bult C.J."/>
            <person name="Agarwala R."/>
            <person name="Cherry J.L."/>
            <person name="DiCuccio M."/>
            <person name="Hlavina W."/>
            <person name="Kapustin Y."/>
            <person name="Meric P."/>
            <person name="Maglott D."/>
            <person name="Birtle Z."/>
            <person name="Marques A.C."/>
            <person name="Graves T."/>
            <person name="Zhou S."/>
            <person name="Teague B."/>
            <person name="Potamousis K."/>
            <person name="Churas C."/>
            <person name="Place M."/>
            <person name="Herschleb J."/>
            <person name="Runnheim R."/>
            <person name="Forrest D."/>
            <person name="Amos-Landgraf J."/>
            <person name="Schwartz D.C."/>
            <person name="Cheng Z."/>
            <person name="Lindblad-Toh K."/>
            <person name="Eichler E.E."/>
            <person name="Ponting C.P."/>
        </authorList>
    </citation>
    <scope>NUCLEOTIDE SEQUENCE [LARGE SCALE GENOMIC DNA]</scope>
    <source>
        <strain>C57BL/6J</strain>
    </source>
</reference>
<reference evidence="6 7" key="2">
    <citation type="journal article" date="2004" name="Genome Res.">
        <title>The status, quality, and expansion of the NIH full-length cDNA project: the Mammalian Gene Collection (MGC).</title>
        <authorList>
            <consortium name="The MGC Project Team"/>
        </authorList>
    </citation>
    <scope>NUCLEOTIDE SEQUENCE [LARGE SCALE MRNA]</scope>
    <source>
        <strain evidence="7">Czech II</strain>
        <tissue evidence="7">Mammary gland</tissue>
    </source>
</reference>
<reference evidence="6 8" key="3">
    <citation type="journal article" date="2005" name="Science">
        <title>The transcriptional landscape of the mammalian genome.</title>
        <authorList>
            <person name="Carninci P."/>
            <person name="Kasukawa T."/>
            <person name="Katayama S."/>
            <person name="Gough J."/>
            <person name="Frith M.C."/>
            <person name="Maeda N."/>
            <person name="Oyama R."/>
            <person name="Ravasi T."/>
            <person name="Lenhard B."/>
            <person name="Wells C."/>
            <person name="Kodzius R."/>
            <person name="Shimokawa K."/>
            <person name="Bajic V.B."/>
            <person name="Brenner S.E."/>
            <person name="Batalov S."/>
            <person name="Forrest A.R."/>
            <person name="Zavolan M."/>
            <person name="Davis M.J."/>
            <person name="Wilming L.G."/>
            <person name="Aidinis V."/>
            <person name="Allen J.E."/>
            <person name="Ambesi-Impiombato A."/>
            <person name="Apweiler R."/>
            <person name="Aturaliya R.N."/>
            <person name="Bailey T.L."/>
            <person name="Bansal M."/>
            <person name="Baxter L."/>
            <person name="Beisel K.W."/>
            <person name="Bersano T."/>
            <person name="Bono H."/>
            <person name="Chalk A.M."/>
            <person name="Chiu K.P."/>
            <person name="Choudhary V."/>
            <person name="Christoffels A."/>
            <person name="Clutterbuck D.R."/>
            <person name="Crowe M.L."/>
            <person name="Dalla E."/>
            <person name="Dalrymple B.P."/>
            <person name="de Bono B."/>
            <person name="Della Gatta G."/>
            <person name="di Bernardo D."/>
            <person name="Down T."/>
            <person name="Engstrom P."/>
            <person name="Fagiolini M."/>
            <person name="Faulkner G."/>
            <person name="Fletcher C.F."/>
            <person name="Fukushima T."/>
            <person name="Furuno M."/>
            <person name="Futaki S."/>
            <person name="Gariboldi M."/>
            <person name="Georgii-Hemming P."/>
            <person name="Gingeras T.R."/>
            <person name="Gojobori T."/>
            <person name="Green R.E."/>
            <person name="Gustincich S."/>
            <person name="Harbers M."/>
            <person name="Hayashi Y."/>
            <person name="Hensch T.K."/>
            <person name="Hirokawa N."/>
            <person name="Hill D."/>
            <person name="Huminiecki L."/>
            <person name="Iacono M."/>
            <person name="Ikeo K."/>
            <person name="Iwama A."/>
            <person name="Ishikawa T."/>
            <person name="Jakt M."/>
            <person name="Kanapin A."/>
            <person name="Katoh M."/>
            <person name="Kawasawa Y."/>
            <person name="Kelso J."/>
            <person name="Kitamura H."/>
            <person name="Kitano H."/>
            <person name="Kollias G."/>
            <person name="Krishnan S.P."/>
            <person name="Kruger A."/>
            <person name="Kummerfeld S.K."/>
            <person name="Kurochkin I.V."/>
            <person name="Lareau L.F."/>
            <person name="Lazarevic D."/>
            <person name="Lipovich L."/>
            <person name="Liu J."/>
            <person name="Liuni S."/>
            <person name="McWilliam S."/>
            <person name="Madan Babu M."/>
            <person name="Madera M."/>
            <person name="Marchionni L."/>
            <person name="Matsuda H."/>
            <person name="Matsuzawa S."/>
            <person name="Miki H."/>
            <person name="Mignone F."/>
            <person name="Miyake S."/>
            <person name="Morris K."/>
            <person name="Mottagui-Tabar S."/>
            <person name="Mulder N."/>
            <person name="Nakano N."/>
            <person name="Nakauchi H."/>
            <person name="Ng P."/>
            <person name="Nilsson R."/>
            <person name="Nishiguchi S."/>
            <person name="Nishikawa S."/>
            <person name="Nori F."/>
            <person name="Ohara O."/>
            <person name="Okazaki Y."/>
            <person name="Orlando V."/>
            <person name="Pang K.C."/>
            <person name="Pavan W.J."/>
            <person name="Pavesi G."/>
            <person name="Pesole G."/>
            <person name="Petrovsky N."/>
            <person name="Piazza S."/>
            <person name="Reed J."/>
            <person name="Reid J.F."/>
            <person name="Ring B.Z."/>
            <person name="Ringwald M."/>
            <person name="Rost B."/>
            <person name="Ruan Y."/>
            <person name="Salzberg S.L."/>
            <person name="Sandelin A."/>
            <person name="Schneider C."/>
            <person name="Schoenbach C."/>
            <person name="Sekiguchi K."/>
            <person name="Semple C.A."/>
            <person name="Seno S."/>
            <person name="Sessa L."/>
            <person name="Sheng Y."/>
            <person name="Shibata Y."/>
            <person name="Shimada H."/>
            <person name="Shimada K."/>
            <person name="Silva D."/>
            <person name="Sinclair B."/>
            <person name="Sperling S."/>
            <person name="Stupka E."/>
            <person name="Sugiura K."/>
            <person name="Sultana R."/>
            <person name="Takenaka Y."/>
            <person name="Taki K."/>
            <person name="Tammoja K."/>
            <person name="Tan S.L."/>
            <person name="Tang S."/>
            <person name="Taylor M.S."/>
            <person name="Tegner J."/>
            <person name="Teichmann S.A."/>
            <person name="Ueda H.R."/>
            <person name="van Nimwegen E."/>
            <person name="Verardo R."/>
            <person name="Wei C.L."/>
            <person name="Yagi K."/>
            <person name="Yamanishi H."/>
            <person name="Zabarovsky E."/>
            <person name="Zhu S."/>
            <person name="Zimmer A."/>
            <person name="Hide W."/>
            <person name="Bult C."/>
            <person name="Grimmond S.M."/>
            <person name="Teasdale R.D."/>
            <person name="Liu E.T."/>
            <person name="Brusic V."/>
            <person name="Quackenbush J."/>
            <person name="Wahlestedt C."/>
            <person name="Mattick J.S."/>
            <person name="Hume D.A."/>
            <person name="Kai C."/>
            <person name="Sasaki D."/>
            <person name="Tomaru Y."/>
            <person name="Fukuda S."/>
            <person name="Kanamori-Katayama M."/>
            <person name="Suzuki M."/>
            <person name="Aoki J."/>
            <person name="Arakawa T."/>
            <person name="Iida J."/>
            <person name="Imamura K."/>
            <person name="Itoh M."/>
            <person name="Kato T."/>
            <person name="Kawaji H."/>
            <person name="Kawagashira N."/>
            <person name="Kawashima T."/>
            <person name="Kojima M."/>
            <person name="Kondo S."/>
            <person name="Konno H."/>
            <person name="Nakano K."/>
            <person name="Ninomiya N."/>
            <person name="Nishio T."/>
            <person name="Okada M."/>
            <person name="Plessy C."/>
            <person name="Shibata K."/>
            <person name="Shiraki T."/>
            <person name="Suzuki S."/>
            <person name="Tagami M."/>
            <person name="Waki K."/>
            <person name="Watahiki A."/>
            <person name="Okamura-Oho Y."/>
            <person name="Suzuki H."/>
            <person name="Kawai J."/>
            <person name="Hayashizaki Y."/>
        </authorList>
    </citation>
    <scope>NUCLEOTIDE SEQUENCE [LARGE SCALE MRNA] OF 1-484</scope>
    <source>
        <strain evidence="8">C57BL/6J</strain>
        <tissue evidence="8">Skin</tissue>
    </source>
</reference>
<reference evidence="6" key="4">
    <citation type="journal article" date="2000" name="Mech. Dev.">
        <title>Expression of PTTG and prc1 genes during telencephalic neurogenesis.</title>
        <authorList>
            <person name="Tarabykin V."/>
            <person name="Britanova O."/>
            <person name="Fradkov A."/>
            <person name="Voss A."/>
            <person name="Katz L.S."/>
            <person name="Lukyanov S."/>
            <person name="Gruss P."/>
        </authorList>
    </citation>
    <scope>DEVELOPMENTAL STAGE</scope>
</reference>
<reference key="5">
    <citation type="journal article" date="2010" name="Cell">
        <title>A tissue-specific atlas of mouse protein phosphorylation and expression.</title>
        <authorList>
            <person name="Huttlin E.L."/>
            <person name="Jedrychowski M.P."/>
            <person name="Elias J.E."/>
            <person name="Goswami T."/>
            <person name="Rad R."/>
            <person name="Beausoleil S.A."/>
            <person name="Villen J."/>
            <person name="Haas W."/>
            <person name="Sowa M.E."/>
            <person name="Gygi S.P."/>
        </authorList>
    </citation>
    <scope>IDENTIFICATION BY MASS SPECTROMETRY [LARGE SCALE ANALYSIS]</scope>
    <source>
        <tissue>Spleen</tissue>
    </source>
</reference>
<sequence>MRRSEVLADESITCLQKALTHLREIWELIGIPEEQRLQRTEVVKKHIKDLLDRMIAEEESLRERLLKSISICQKELSTLCSELQVKPFQEEKDTTILQLEKDLRTQVELMRKQKKERKQELKLLQEQEQELRDILCMPPCDVDSTSVPTLEELKLFRQRVATLRETKESRREEFVNIKKQIILCMEELEHSPDTSFERDVVCEDESAFCLSLENIATLQKLLKQLEMKKSQNEAECEGLRTQIRELWDRLQIPEEEREPVEAIMTGSKTKIRNALKLEVDRLEELKMQNIKQVIEKIRVELAQFWDQCFYSQEQRQAFAPYYSEDYTENLLHLHDAEIVRLRNYYDVHKELFQGVQKWEESWKLFLEFERKASDPGRFTNRGGNLLKEEKERAKLQKTLPKLEEELKARIEQWEQEHSTAFVVNGQKFMEYVTEQWELHRLEKERAKQERQLKNKKQTEAEMLYGSTPRTPSKRPGQTPKKSGKMNTTTMSSATPNSSIRPVFGGSVYRSPMSRLPPSGSKSVVTSLCSGKKTPRAAQLRANKENLDLNGSILSGGYPGSTPLQHNCSIKSVASTYSEFSRELSKASRSDATSRILNSTNIQS</sequence>
<name>PRC1_MOUSE</name>
<evidence type="ECO:0000250" key="1"/>
<evidence type="ECO:0000250" key="2">
    <source>
        <dbReference type="UniProtKB" id="O43663"/>
    </source>
</evidence>
<evidence type="ECO:0000255" key="3"/>
<evidence type="ECO:0000256" key="4">
    <source>
        <dbReference type="SAM" id="MobiDB-lite"/>
    </source>
</evidence>
<evidence type="ECO:0000269" key="5">
    <source>
    </source>
</evidence>
<evidence type="ECO:0000305" key="6"/>
<evidence type="ECO:0000312" key="7">
    <source>
        <dbReference type="EMBL" id="AAH05475.1"/>
    </source>
</evidence>
<evidence type="ECO:0000312" key="8">
    <source>
        <dbReference type="EMBL" id="BAC26320.1"/>
    </source>
</evidence>
<evidence type="ECO:0000312" key="9">
    <source>
        <dbReference type="MGI" id="MGI:1858961"/>
    </source>
</evidence>
<feature type="chain" id="PRO_0000229738" description="Protein regulator of cytokinesis 1" evidence="6">
    <location>
        <begin position="1"/>
        <end position="603"/>
    </location>
</feature>
<feature type="region of interest" description="Dimerization" evidence="1">
    <location>
        <begin position="1"/>
        <end position="341"/>
    </location>
</feature>
<feature type="region of interest" description="Spectrin-fold" evidence="1">
    <location>
        <begin position="342"/>
        <end position="466"/>
    </location>
</feature>
<feature type="region of interest" description="Disordered" evidence="4">
    <location>
        <begin position="447"/>
        <end position="502"/>
    </location>
</feature>
<feature type="region of interest" description="Unstructured, Arg/Lys rich" evidence="1">
    <location>
        <begin position="467"/>
        <end position="603"/>
    </location>
</feature>
<feature type="region of interest" description="Disordered" evidence="4">
    <location>
        <begin position="583"/>
        <end position="603"/>
    </location>
</feature>
<feature type="coiled-coil region" evidence="3">
    <location>
        <begin position="34"/>
        <end position="65"/>
    </location>
</feature>
<feature type="coiled-coil region" evidence="3">
    <location>
        <begin position="96"/>
        <end position="136"/>
    </location>
</feature>
<feature type="coiled-coil region" evidence="3">
    <location>
        <begin position="211"/>
        <end position="246"/>
    </location>
</feature>
<feature type="coiled-coil region" evidence="3">
    <location>
        <begin position="272"/>
        <end position="304"/>
    </location>
</feature>
<feature type="coiled-coil region" evidence="3">
    <location>
        <begin position="383"/>
        <end position="463"/>
    </location>
</feature>
<feature type="compositionally biased region" description="Basic and acidic residues" evidence="4">
    <location>
        <begin position="447"/>
        <end position="459"/>
    </location>
</feature>
<feature type="compositionally biased region" description="Polar residues" evidence="4">
    <location>
        <begin position="484"/>
        <end position="499"/>
    </location>
</feature>
<feature type="compositionally biased region" description="Polar residues" evidence="4">
    <location>
        <begin position="589"/>
        <end position="603"/>
    </location>
</feature>
<feature type="site" description="Tubulin binding" evidence="1">
    <location>
        <position position="377"/>
    </location>
</feature>
<feature type="site" description="Tubulin binding" evidence="1">
    <location>
        <position position="387"/>
    </location>
</feature>
<feature type="modified residue" description="Phosphothreonine; by CDK1" evidence="2">
    <location>
        <position position="470"/>
    </location>
</feature>
<feature type="modified residue" description="Phosphoserine" evidence="2">
    <location>
        <position position="510"/>
    </location>
</feature>
<feature type="modified residue" description="Phosphoserine" evidence="2">
    <location>
        <position position="568"/>
    </location>
</feature>
<feature type="modified residue" description="Phosphothreonine" evidence="2">
    <location>
        <position position="575"/>
    </location>
</feature>
<feature type="modified residue" description="Phosphothreonine; by PLK1" evidence="2">
    <location>
        <position position="599"/>
    </location>
</feature>
<feature type="sequence conflict" description="In Ref. 2; AAH05475." evidence="6" ref="2">
    <original>V</original>
    <variation>A</variation>
    <location>
        <position position="347"/>
    </location>
</feature>
<comment type="function">
    <text evidence="2">Key regulator of cytokinesis that cross-links antiparrallel microtubules at an average distance of 35 nM. Essential for controlling the spatiotemporal formation of the midzone and successful cytokinesis. Required for KIF14 localization to the central spindle and midbody. Required to recruit PLK1 to the spindle. Stimulates PLK1 phosphorylation of RACGAP1 to allow recruitment of ECT2 to the central spindle. Acts as an oncogene for promoting bladder cancer cells proliferation, apoptosis inhibition and carcinogenic progression.</text>
</comment>
<comment type="subunit">
    <text evidence="2">Homodimer. Interacts with the C-terminal Rho-GAP domain and the basic region of RACGAP1. The interaction with RACGAP1 inhibits its GAP activity towards CDC42 in vitro, which may be required for maintaining normal spindle morphology. Interacts (via N-terminus) with the C-terminus of CENPE (via C-terminus); the interaction occurs during late mitosis. Interacts (via N-terminus) with KIF4A (via C-terminus); the interaction is required for the progression of mitosis. Interacts (via N-terminus) with KIF23 (via C-terminus); the interaction occurs during late mitosis. Interacts with KIF14 and KIF20A. Interacts with PLK1. Interacts with KIF20B. Interacts with CCDC66.</text>
</comment>
<comment type="subcellular location">
    <subcellularLocation>
        <location evidence="2">Nucleus</location>
    </subcellularLocation>
    <subcellularLocation>
        <location evidence="1">Cytoplasm</location>
    </subcellularLocation>
    <subcellularLocation>
        <location evidence="1">Cytoplasm</location>
        <location evidence="1">Cytoskeleton</location>
        <location evidence="1">Spindle pole</location>
    </subcellularLocation>
    <subcellularLocation>
        <location evidence="2">Midbody</location>
    </subcellularLocation>
    <text evidence="2">Colocalized with KIF20B in the nucleus of bladder carcinoma cells at the interphase. Colocalized with KIF20B in bladder carcinoma cells at prophase, metaphase, early anaphase, at the midzone in late anaphase and at the contractile ring in telophase. Predominantly localized to the nucleus of interphase cells. During mitosis becomes associated with the mitotic spindle poles, and localizes with the cell midbody during cytokinesis. Co-localizes with PRC1 in early mitosis and at the spindle midzone from anaphase B to telophase.</text>
</comment>
<comment type="developmental stage">
    <text evidence="5">During the stages 11.5-13.5 dpc it is expressed in most embryonic tissues. Within the telencephalon, it is predominantly expressed inside the ventricular zone where expression reaches its peak at 15.5 dpc and starts to decrease by 18.5 dpc. Expression is also observed in mitotically active cells outside the telencephalon, but not in adult brain.</text>
</comment>
<comment type="domain">
    <text evidence="1">Microtubule binding occurs via a basic patch in the central spectrin-like domain and also requires the unstructured C-terminal domain.</text>
</comment>
<comment type="PTM">
    <text evidence="1">Phosphorylation by CDK1 in early mitosis holds PRC1 in an inactive monomeric state, during the metaphase to anaphase transition, PRC1 is dephosphorylated, promoting interaction with KIF4A, which then translocates PRC1 along mitotic spindles to the plus ends of antiparallel interdigitating microtubules. Dephosphorylation also promotes MT-bundling activity by allowing dimerization. Phosphorylation by CDK1 prevents PLK1-binding: upon degradation of CDK1 at anaphase and dephosphorylation, it is then phosphorylated by PLK1, leading to cytokinesis (By similarity).</text>
</comment>
<comment type="similarity">
    <text evidence="6">Belongs to the MAP65/ASE1 family.</text>
</comment>
<comment type="sequence caution" evidence="6">
    <conflict type="miscellaneous discrepancy">
        <sequence resource="EMBL-CDS" id="BAC26320"/>
    </conflict>
    <text>Probable intron retention.</text>
</comment>
<gene>
    <name evidence="9" type="primary">Prc1</name>
</gene>
<organism>
    <name type="scientific">Mus musculus</name>
    <name type="common">Mouse</name>
    <dbReference type="NCBI Taxonomy" id="10090"/>
    <lineage>
        <taxon>Eukaryota</taxon>
        <taxon>Metazoa</taxon>
        <taxon>Chordata</taxon>
        <taxon>Craniata</taxon>
        <taxon>Vertebrata</taxon>
        <taxon>Euteleostomi</taxon>
        <taxon>Mammalia</taxon>
        <taxon>Eutheria</taxon>
        <taxon>Euarchontoglires</taxon>
        <taxon>Glires</taxon>
        <taxon>Rodentia</taxon>
        <taxon>Myomorpha</taxon>
        <taxon>Muroidea</taxon>
        <taxon>Muridae</taxon>
        <taxon>Murinae</taxon>
        <taxon>Mus</taxon>
        <taxon>Mus</taxon>
    </lineage>
</organism>
<protein>
    <recommendedName>
        <fullName evidence="9">Protein regulator of cytokinesis 1</fullName>
    </recommendedName>
</protein>
<proteinExistence type="evidence at protein level"/>
<accession>Q99K43</accession>
<accession>E9QPF0</accession>
<accession>Q8CE25</accession>
<dbReference type="EMBL" id="AC109232">
    <property type="status" value="NOT_ANNOTATED_CDS"/>
    <property type="molecule type" value="Genomic_DNA"/>
</dbReference>
<dbReference type="EMBL" id="AC136740">
    <property type="status" value="NOT_ANNOTATED_CDS"/>
    <property type="molecule type" value="Genomic_DNA"/>
</dbReference>
<dbReference type="EMBL" id="BC005475">
    <property type="protein sequence ID" value="AAH05475.1"/>
    <property type="molecule type" value="mRNA"/>
</dbReference>
<dbReference type="EMBL" id="AK029140">
    <property type="protein sequence ID" value="BAC26320.1"/>
    <property type="status" value="ALT_SEQ"/>
    <property type="molecule type" value="mRNA"/>
</dbReference>
<dbReference type="CCDS" id="CCDS71985.1"/>
<dbReference type="RefSeq" id="NP_001272926.1">
    <property type="nucleotide sequence ID" value="NM_001285997.2"/>
</dbReference>
<dbReference type="SMR" id="Q99K43"/>
<dbReference type="BioGRID" id="231410">
    <property type="interactions" value="4"/>
</dbReference>
<dbReference type="FunCoup" id="Q99K43">
    <property type="interactions" value="2045"/>
</dbReference>
<dbReference type="IntAct" id="Q99K43">
    <property type="interactions" value="4"/>
</dbReference>
<dbReference type="STRING" id="10090.ENSMUSP00000129675"/>
<dbReference type="iPTMnet" id="Q99K43"/>
<dbReference type="PhosphoSitePlus" id="Q99K43"/>
<dbReference type="PaxDb" id="10090-ENSMUSP00000129675"/>
<dbReference type="ProteomicsDB" id="291858"/>
<dbReference type="Pumba" id="Q99K43"/>
<dbReference type="Antibodypedia" id="28979">
    <property type="antibodies" value="273 antibodies from 36 providers"/>
</dbReference>
<dbReference type="Ensembl" id="ENSMUST00000047558.14">
    <property type="protein sequence ID" value="ENSMUSP00000043379.8"/>
    <property type="gene ID" value="ENSMUSG00000038943.17"/>
</dbReference>
<dbReference type="GeneID" id="233406"/>
<dbReference type="KEGG" id="mmu:233406"/>
<dbReference type="UCSC" id="uc009iaf.3">
    <property type="organism name" value="mouse"/>
</dbReference>
<dbReference type="AGR" id="MGI:1858961"/>
<dbReference type="CTD" id="9055"/>
<dbReference type="MGI" id="MGI:1858961">
    <property type="gene designation" value="Prc1"/>
</dbReference>
<dbReference type="VEuPathDB" id="HostDB:ENSMUSG00000038943"/>
<dbReference type="eggNOG" id="KOG4302">
    <property type="taxonomic scope" value="Eukaryota"/>
</dbReference>
<dbReference type="GeneTree" id="ENSGT00390000009453"/>
<dbReference type="InParanoid" id="Q99K43"/>
<dbReference type="OrthoDB" id="642895at2759"/>
<dbReference type="Reactome" id="R-MMU-5625900">
    <property type="pathway name" value="RHO GTPases activate CIT"/>
</dbReference>
<dbReference type="BioGRID-ORCS" id="233406">
    <property type="hits" value="25 hits in 78 CRISPR screens"/>
</dbReference>
<dbReference type="ChiTaRS" id="Prc1">
    <property type="organism name" value="mouse"/>
</dbReference>
<dbReference type="PRO" id="PR:Q99K43"/>
<dbReference type="Proteomes" id="UP000000589">
    <property type="component" value="Chromosome 7"/>
</dbReference>
<dbReference type="RNAct" id="Q99K43">
    <property type="molecule type" value="protein"/>
</dbReference>
<dbReference type="Bgee" id="ENSMUSG00000038943">
    <property type="expression patterns" value="Expressed in primary oocyte and 224 other cell types or tissues"/>
</dbReference>
<dbReference type="ExpressionAtlas" id="Q99K43">
    <property type="expression patterns" value="baseline and differential"/>
</dbReference>
<dbReference type="GO" id="GO:0070938">
    <property type="term" value="C:contractile ring"/>
    <property type="evidence" value="ECO:0000250"/>
    <property type="project" value="UniProtKB"/>
</dbReference>
<dbReference type="GO" id="GO:0005737">
    <property type="term" value="C:cytoplasm"/>
    <property type="evidence" value="ECO:0007669"/>
    <property type="project" value="UniProtKB-SubCell"/>
</dbReference>
<dbReference type="GO" id="GO:0005874">
    <property type="term" value="C:microtubule"/>
    <property type="evidence" value="ECO:0007669"/>
    <property type="project" value="UniProtKB-KW"/>
</dbReference>
<dbReference type="GO" id="GO:0030496">
    <property type="term" value="C:midbody"/>
    <property type="evidence" value="ECO:0000250"/>
    <property type="project" value="UniProtKB"/>
</dbReference>
<dbReference type="GO" id="GO:0005634">
    <property type="term" value="C:nucleus"/>
    <property type="evidence" value="ECO:0000250"/>
    <property type="project" value="UniProtKB"/>
</dbReference>
<dbReference type="GO" id="GO:0005819">
    <property type="term" value="C:spindle"/>
    <property type="evidence" value="ECO:0000250"/>
    <property type="project" value="UniProtKB"/>
</dbReference>
<dbReference type="GO" id="GO:0000922">
    <property type="term" value="C:spindle pole"/>
    <property type="evidence" value="ECO:0007669"/>
    <property type="project" value="UniProtKB-SubCell"/>
</dbReference>
<dbReference type="GO" id="GO:0008017">
    <property type="term" value="F:microtubule binding"/>
    <property type="evidence" value="ECO:0007669"/>
    <property type="project" value="InterPro"/>
</dbReference>
<dbReference type="GO" id="GO:0051301">
    <property type="term" value="P:cell division"/>
    <property type="evidence" value="ECO:0007669"/>
    <property type="project" value="UniProtKB-KW"/>
</dbReference>
<dbReference type="GO" id="GO:0001578">
    <property type="term" value="P:microtubule bundle formation"/>
    <property type="evidence" value="ECO:0000266"/>
    <property type="project" value="MGI"/>
</dbReference>
<dbReference type="GO" id="GO:0008284">
    <property type="term" value="P:positive regulation of cell population proliferation"/>
    <property type="evidence" value="ECO:0000250"/>
    <property type="project" value="UniProtKB"/>
</dbReference>
<dbReference type="GO" id="GO:0032465">
    <property type="term" value="P:regulation of cytokinesis"/>
    <property type="evidence" value="ECO:0000250"/>
    <property type="project" value="UniProtKB"/>
</dbReference>
<dbReference type="Gene3D" id="1.20.58.1520">
    <property type="match status" value="1"/>
</dbReference>
<dbReference type="InterPro" id="IPR007145">
    <property type="entry name" value="MAP65_Ase1_PRC1"/>
</dbReference>
<dbReference type="PANTHER" id="PTHR19321:SF1">
    <property type="entry name" value="PROTEIN REGULATOR OF CYTOKINESIS 1"/>
    <property type="match status" value="1"/>
</dbReference>
<dbReference type="PANTHER" id="PTHR19321">
    <property type="entry name" value="PROTEIN REGULATOR OF CYTOKINESIS 1 PRC1-RELATED"/>
    <property type="match status" value="1"/>
</dbReference>
<dbReference type="Pfam" id="PF03999">
    <property type="entry name" value="MAP65_ASE1"/>
    <property type="match status" value="1"/>
</dbReference>